<protein>
    <recommendedName>
        <fullName evidence="5">Alliin lyase 2</fullName>
        <shortName evidence="5">Alliinase-2</shortName>
        <ecNumber evidence="4">4.4.1.4</ecNumber>
    </recommendedName>
    <alternativeName>
        <fullName evidence="5">Cysteine sulphoxide lyase 2</fullName>
    </alternativeName>
</protein>
<organism>
    <name type="scientific">Allium sativum</name>
    <name type="common">Garlic</name>
    <dbReference type="NCBI Taxonomy" id="4682"/>
    <lineage>
        <taxon>Eukaryota</taxon>
        <taxon>Viridiplantae</taxon>
        <taxon>Streptophyta</taxon>
        <taxon>Embryophyta</taxon>
        <taxon>Tracheophyta</taxon>
        <taxon>Spermatophyta</taxon>
        <taxon>Magnoliopsida</taxon>
        <taxon>Liliopsida</taxon>
        <taxon>Asparagales</taxon>
        <taxon>Amaryllidaceae</taxon>
        <taxon>Allioideae</taxon>
        <taxon>Allieae</taxon>
        <taxon>Allium</taxon>
    </lineage>
</organism>
<reference key="1">
    <citation type="journal article" date="1994" name="Appl. Biochem. Biotechnol.">
        <title>Alliin lyase (Alliinase) from garlic (Allium sativum). Biochemical characterization and cDNA cloning.</title>
        <authorList>
            <person name="Rabinkov A."/>
            <person name="Zhu X.-Z."/>
            <person name="Grafi G."/>
            <person name="Galili G."/>
            <person name="Mirelman D."/>
        </authorList>
    </citation>
    <scope>NUCLEOTIDE SEQUENCE [MRNA]</scope>
    <scope>FUNCTION</scope>
    <scope>CATALYTIC ACTIVITY</scope>
    <scope>PARTIAL PROTEIN SEQUENCE</scope>
    <scope>CHARACTERIZATION</scope>
    <scope>TISSUE SPECIFICITY</scope>
    <scope>BIOPHYSICOCHEMICAL PROPERTIES</scope>
    <scope>SUBUNIT</scope>
    <scope>GLYCOSYLATION</scope>
    <source>
        <tissue>Bulb</tissue>
    </source>
</reference>
<reference key="2">
    <citation type="journal article" date="2014" name="Molecules">
        <title>Allicin: chemistry and biological properties.</title>
        <authorList>
            <person name="Borlinghaus J."/>
            <person name="Albrecht F."/>
            <person name="Gruhlke M.C.H."/>
            <person name="Nwachukwu I.D."/>
            <person name="Slusarenko A.J."/>
        </authorList>
    </citation>
    <scope>XXX</scope>
    <scope>REVIEW</scope>
</reference>
<reference key="3">
    <citation type="journal article" date="2020" name="Folia Microbiol. (Praha)">
        <title>Review: antimicrobial properties of allicin used alone or in combination with other medications.</title>
        <authorList>
            <person name="Choo S."/>
            <person name="Chin V.K."/>
            <person name="Wong E.H."/>
            <person name="Madhavan P."/>
            <person name="Tay S.T."/>
            <person name="Yong P.V.C."/>
            <person name="Chong P.P."/>
        </authorList>
    </citation>
    <scope>XXX</scope>
    <scope>REVIEW</scope>
</reference>
<dbReference type="EC" id="4.4.1.4" evidence="4"/>
<dbReference type="EMBL" id="S73324">
    <property type="protein sequence ID" value="AAB32477.1"/>
    <property type="molecule type" value="mRNA"/>
</dbReference>
<dbReference type="SMR" id="Q41233"/>
<dbReference type="Allergome" id="843">
    <property type="allergen name" value="All s Alliin lyase"/>
</dbReference>
<dbReference type="BioCyc" id="MetaCyc:MONOMER-13491"/>
<dbReference type="BRENDA" id="4.4.1.4">
    <property type="organism ID" value="252"/>
</dbReference>
<dbReference type="GO" id="GO:0005773">
    <property type="term" value="C:vacuole"/>
    <property type="evidence" value="ECO:0007669"/>
    <property type="project" value="UniProtKB-SubCell"/>
</dbReference>
<dbReference type="GO" id="GO:0047654">
    <property type="term" value="F:alliin lyase activity"/>
    <property type="evidence" value="ECO:0000314"/>
    <property type="project" value="UniProtKB"/>
</dbReference>
<dbReference type="GO" id="GO:0031404">
    <property type="term" value="F:chloride ion binding"/>
    <property type="evidence" value="ECO:0000250"/>
    <property type="project" value="UniProtKB"/>
</dbReference>
<dbReference type="GO" id="GO:0030170">
    <property type="term" value="F:pyridoxal phosphate binding"/>
    <property type="evidence" value="ECO:0000250"/>
    <property type="project" value="UniProtKB"/>
</dbReference>
<dbReference type="GO" id="GO:0008483">
    <property type="term" value="F:transaminase activity"/>
    <property type="evidence" value="ECO:0007669"/>
    <property type="project" value="TreeGrafter"/>
</dbReference>
<dbReference type="GO" id="GO:0006520">
    <property type="term" value="P:amino acid metabolic process"/>
    <property type="evidence" value="ECO:0007669"/>
    <property type="project" value="TreeGrafter"/>
</dbReference>
<dbReference type="Gene3D" id="3.90.1150.10">
    <property type="entry name" value="Aspartate Aminotransferase, domain 1"/>
    <property type="match status" value="1"/>
</dbReference>
<dbReference type="Gene3D" id="2.10.25.30">
    <property type="entry name" value="EGF-like, alliinase"/>
    <property type="match status" value="1"/>
</dbReference>
<dbReference type="Gene3D" id="3.40.640.10">
    <property type="entry name" value="Type I PLP-dependent aspartate aminotransferase-like (Major domain)"/>
    <property type="match status" value="1"/>
</dbReference>
<dbReference type="InterPro" id="IPR006948">
    <property type="entry name" value="Alliinase_C"/>
</dbReference>
<dbReference type="InterPro" id="IPR037029">
    <property type="entry name" value="Alliinase_N_sf"/>
</dbReference>
<dbReference type="InterPro" id="IPR006947">
    <property type="entry name" value="EGF_alliinase"/>
</dbReference>
<dbReference type="InterPro" id="IPR050478">
    <property type="entry name" value="Ethylene_sulfur-biosynth"/>
</dbReference>
<dbReference type="InterPro" id="IPR015424">
    <property type="entry name" value="PyrdxlP-dep_Trfase"/>
</dbReference>
<dbReference type="InterPro" id="IPR015421">
    <property type="entry name" value="PyrdxlP-dep_Trfase_major"/>
</dbReference>
<dbReference type="InterPro" id="IPR015422">
    <property type="entry name" value="PyrdxlP-dep_Trfase_small"/>
</dbReference>
<dbReference type="PANTHER" id="PTHR43795">
    <property type="entry name" value="BIFUNCTIONAL ASPARTATE AMINOTRANSFERASE AND GLUTAMATE/ASPARTATE-PREPHENATE AMINOTRANSFERASE-RELATED"/>
    <property type="match status" value="1"/>
</dbReference>
<dbReference type="PANTHER" id="PTHR43795:SF20">
    <property type="entry name" value="TRYPTOPHAN AMINOTRANSFERASE-RELATED PROTEIN 3"/>
    <property type="match status" value="1"/>
</dbReference>
<dbReference type="Pfam" id="PF04864">
    <property type="entry name" value="Alliinase_C"/>
    <property type="match status" value="1"/>
</dbReference>
<dbReference type="Pfam" id="PF04863">
    <property type="entry name" value="EGF_alliinase"/>
    <property type="match status" value="1"/>
</dbReference>
<dbReference type="SUPFAM" id="SSF53383">
    <property type="entry name" value="PLP-dependent transferases"/>
    <property type="match status" value="1"/>
</dbReference>
<dbReference type="PROSITE" id="PS00022">
    <property type="entry name" value="EGF_1"/>
    <property type="match status" value="1"/>
</dbReference>
<comment type="function">
    <text evidence="4">Able to cleave the C-S bond of sulfoxide derivatives of Cys to produce allicin, thus giving rise to all sulfur compounds which are responsible for most of the properties of garlic, such as the specific smell and flavor as well as the health benefits like blood lipid or blood pressure lowering.</text>
</comment>
<comment type="catalytic activity">
    <reaction evidence="4">
        <text>an S-alkyl-L-cysteine S-oxide = an S-alkyl sulfenate + 2-aminoprop-2-enoate</text>
        <dbReference type="Rhea" id="RHEA:20141"/>
        <dbReference type="ChEBI" id="CHEBI:22326"/>
        <dbReference type="ChEBI" id="CHEBI:76565"/>
        <dbReference type="ChEBI" id="CHEBI:142409"/>
        <dbReference type="EC" id="4.4.1.4"/>
    </reaction>
</comment>
<comment type="catalytic activity">
    <reaction evidence="4">
        <text>alliin = allylsulfenate + 2-aminoprop-2-enoate</text>
        <dbReference type="Rhea" id="RHEA:54688"/>
        <dbReference type="ChEBI" id="CHEBI:76565"/>
        <dbReference type="ChEBI" id="CHEBI:132987"/>
        <dbReference type="ChEBI" id="CHEBI:138314"/>
        <dbReference type="EC" id="4.4.1.4"/>
    </reaction>
</comment>
<comment type="cofactor">
    <cofactor evidence="1">
        <name>pyridoxal 5'-phosphate</name>
        <dbReference type="ChEBI" id="CHEBI:597326"/>
    </cofactor>
</comment>
<comment type="biophysicochemical properties">
    <kinetics>
        <KM evidence="4">1.1 mM for S-allylcysteine sulfoxide</KM>
    </kinetics>
    <phDependence>
        <text evidence="4">Optimum pH is 6.5.</text>
    </phDependence>
</comment>
<comment type="subunit">
    <text evidence="4">Homodimer.</text>
</comment>
<comment type="subcellular location">
    <subcellularLocation>
        <location evidence="7">Vacuole</location>
    </subcellularLocation>
</comment>
<comment type="tissue specificity">
    <text evidence="4">High expression in bulbs, lower expression in leaves, and no expression in roots.</text>
</comment>
<comment type="domain">
    <text evidence="1">The 6 Cys residues of the EGF-like domain are arranged in a disulfide pattern different from the one found in the canonical EGFs. The function of this domain is unclear. It may be a binding site for other proteins or the docking site for a putative alliinase receptor (By similarity).</text>
</comment>
<comment type="PTM">
    <text evidence="4">Glycosylated.</text>
</comment>
<comment type="similarity">
    <text evidence="6">Belongs to the alliinase family.</text>
</comment>
<comment type="online information" name="Protein Spotlight">
    <link uri="https://www.proteinspotlight.org/back_issues/039"/>
    <text>What's that smell? - Issue 39 of October 2003</text>
</comment>
<proteinExistence type="evidence at protein level"/>
<accession>Q41233</accession>
<name>ALLN2_ALLSA</name>
<evidence type="ECO:0000250" key="1">
    <source>
        <dbReference type="UniProtKB" id="Q01594"/>
    </source>
</evidence>
<evidence type="ECO:0000255" key="2"/>
<evidence type="ECO:0000255" key="3">
    <source>
        <dbReference type="PROSITE-ProRule" id="PRU00498"/>
    </source>
</evidence>
<evidence type="ECO:0000269" key="4">
    <source>
    </source>
</evidence>
<evidence type="ECO:0000303" key="5">
    <source>
    </source>
</evidence>
<evidence type="ECO:0000305" key="6"/>
<evidence type="ECO:0000305" key="7">
    <source>
    </source>
</evidence>
<keyword id="KW-0868">Chloride</keyword>
<keyword id="KW-0903">Direct protein sequencing</keyword>
<keyword id="KW-1015">Disulfide bond</keyword>
<keyword id="KW-0245">EGF-like domain</keyword>
<keyword id="KW-0325">Glycoprotein</keyword>
<keyword id="KW-0456">Lyase</keyword>
<keyword id="KW-0663">Pyridoxal phosphate</keyword>
<keyword id="KW-0732">Signal</keyword>
<keyword id="KW-0926">Vacuole</keyword>
<feature type="signal peptide" evidence="2">
    <location>
        <begin position="1"/>
        <end position="15"/>
    </location>
</feature>
<feature type="propeptide" id="PRO_0000020679" evidence="1">
    <location>
        <begin position="16"/>
        <end position="25"/>
    </location>
</feature>
<feature type="chain" id="PRO_0000020680" description="Alliin lyase 2">
    <location>
        <begin position="26"/>
        <end position="473"/>
    </location>
</feature>
<feature type="domain" description="EGF-like; atypical">
    <location>
        <begin position="38"/>
        <end position="84"/>
    </location>
</feature>
<feature type="binding site" evidence="1">
    <location>
        <begin position="117"/>
        <end position="125"/>
    </location>
    <ligand>
        <name>chloride</name>
        <dbReference type="ChEBI" id="CHEBI:17996"/>
    </ligand>
</feature>
<feature type="modified residue" description="N6-(pyridoxal phosphate)lysine" evidence="1">
    <location>
        <position position="276"/>
    </location>
</feature>
<feature type="glycosylation site" description="N-linked (GlcNAc...) asparagine" evidence="2">
    <location>
        <position position="44"/>
    </location>
</feature>
<feature type="glycosylation site" description="N-linked (GlcNAc...) asparagine" evidence="1 3">
    <location>
        <position position="171"/>
    </location>
</feature>
<feature type="glycosylation site" description="N-linked (GlcNAc...) asparagine" evidence="1 3">
    <location>
        <position position="216"/>
    </location>
</feature>
<feature type="glycosylation site" description="N-linked (GlcNAc...) asparagine" evidence="1 3">
    <location>
        <position position="353"/>
    </location>
</feature>
<feature type="disulfide bond" evidence="1">
    <location>
        <begin position="45"/>
        <end position="64"/>
    </location>
</feature>
<feature type="disulfide bond" evidence="1">
    <location>
        <begin position="66"/>
        <end position="75"/>
    </location>
</feature>
<feature type="disulfide bond" evidence="1">
    <location>
        <begin position="69"/>
        <end position="82"/>
    </location>
</feature>
<feature type="disulfide bond" evidence="1">
    <location>
        <begin position="393"/>
        <end position="401"/>
    </location>
</feature>
<sequence length="473" mass="54183">MICLVILTCIIMSNSFVNNNNMVQAKMTWTMKAAEEAEAVANINCSEHGRAFLDGIISEGSPKCECNTCYTGPDCSEKIQGCSADVASGDGLFLEEYWKQHKEASAVLVSPWHRMSYFFNPVSNFISFELEKTIKELHEVVGNAAAKDRYIVFGVGVTQLIHGLVISLSPNMTATPDAPESKVVAHAPFYPVFREQTKYFDKKGYVWAGNAANYVNVSNPEQYIEMVTSPNNPEGLLRHAVIKGCKSIYDMVYYWPHYTPIKYKADEDILLFTMSKFTGHSGSRFGWALIKDESVYNNLLNYMTKNTEGTPRETQLRSLKVLKEIVAMVKTQKGTMRDLNTFGFKKLRERWVNITALLDQSDRFSYQELPQSEYCNYFRRMRPPSPSYAWVNCEWEEDKDCYQTFQNGRINTQSGVGFEASSRYVRLSLIKTQDDFDQLMYYLKDMVKAKRKTPLIKQLFTDETETASRRPFI</sequence>